<organism>
    <name type="scientific">Oryza sativa subsp. japonica</name>
    <name type="common">Rice</name>
    <dbReference type="NCBI Taxonomy" id="39947"/>
    <lineage>
        <taxon>Eukaryota</taxon>
        <taxon>Viridiplantae</taxon>
        <taxon>Streptophyta</taxon>
        <taxon>Embryophyta</taxon>
        <taxon>Tracheophyta</taxon>
        <taxon>Spermatophyta</taxon>
        <taxon>Magnoliopsida</taxon>
        <taxon>Liliopsida</taxon>
        <taxon>Poales</taxon>
        <taxon>Poaceae</taxon>
        <taxon>BOP clade</taxon>
        <taxon>Oryzoideae</taxon>
        <taxon>Oryzeae</taxon>
        <taxon>Oryzinae</taxon>
        <taxon>Oryza</taxon>
        <taxon>Oryza sativa</taxon>
    </lineage>
</organism>
<dbReference type="EMBL" id="AP005774">
    <property type="protein sequence ID" value="BAC55855.1"/>
    <property type="molecule type" value="Genomic_DNA"/>
</dbReference>
<dbReference type="EMBL" id="AP014963">
    <property type="protein sequence ID" value="BAT00719.1"/>
    <property type="molecule type" value="Genomic_DNA"/>
</dbReference>
<dbReference type="SMR" id="Q84YL3"/>
<dbReference type="FunCoup" id="Q84YL3">
    <property type="interactions" value="33"/>
</dbReference>
<dbReference type="PaxDb" id="39947-Q84YL3"/>
<dbReference type="EnsemblPlants" id="Os07t0232100-01">
    <property type="protein sequence ID" value="Os07t0232100-01"/>
    <property type="gene ID" value="Os07g0232100"/>
</dbReference>
<dbReference type="Gramene" id="Os07t0232100-01">
    <property type="protein sequence ID" value="Os07t0232100-01"/>
    <property type="gene ID" value="Os07g0232100"/>
</dbReference>
<dbReference type="HOGENOM" id="CLU_1043487_0_0_1"/>
<dbReference type="InParanoid" id="Q84YL3"/>
<dbReference type="OMA" id="MTIGWKE"/>
<dbReference type="Proteomes" id="UP000000763">
    <property type="component" value="Chromosome 7"/>
</dbReference>
<dbReference type="Proteomes" id="UP000059680">
    <property type="component" value="Chromosome 7"/>
</dbReference>
<dbReference type="GO" id="GO:0005634">
    <property type="term" value="C:nucleus"/>
    <property type="evidence" value="ECO:0007669"/>
    <property type="project" value="UniProtKB-SubCell"/>
</dbReference>
<dbReference type="GO" id="GO:0003677">
    <property type="term" value="F:DNA binding"/>
    <property type="evidence" value="ECO:0007669"/>
    <property type="project" value="UniProtKB-KW"/>
</dbReference>
<dbReference type="Gene3D" id="2.40.330.10">
    <property type="entry name" value="DNA-binding pseudobarrel domain"/>
    <property type="match status" value="1"/>
</dbReference>
<dbReference type="InterPro" id="IPR003340">
    <property type="entry name" value="B3_DNA-bd"/>
</dbReference>
<dbReference type="InterPro" id="IPR015300">
    <property type="entry name" value="DNA-bd_pseudobarrel_sf"/>
</dbReference>
<dbReference type="Pfam" id="PF02362">
    <property type="entry name" value="B3"/>
    <property type="match status" value="1"/>
</dbReference>
<dbReference type="SMART" id="SM01019">
    <property type="entry name" value="B3"/>
    <property type="match status" value="1"/>
</dbReference>
<dbReference type="SUPFAM" id="SSF101936">
    <property type="entry name" value="DNA-binding pseudobarrel domain"/>
    <property type="match status" value="1"/>
</dbReference>
<dbReference type="PROSITE" id="PS50863">
    <property type="entry name" value="B3"/>
    <property type="match status" value="1"/>
</dbReference>
<feature type="chain" id="PRO_0000376974" description="Putative B3 domain-containing protein LOC_Os07g12820">
    <location>
        <begin position="1"/>
        <end position="267"/>
    </location>
</feature>
<feature type="DNA-binding region" description="TF-B3" evidence="1">
    <location>
        <begin position="4"/>
        <end position="99"/>
    </location>
</feature>
<comment type="subcellular location">
    <subcellularLocation>
        <location evidence="1">Nucleus</location>
    </subcellularLocation>
</comment>
<sequence>MHSPTFSMVKIKTASQDYLPIPVAVTKASRLKHGRTLKLMTAHGLKIRVKVAEARDKLYMTIGWKEFIQEAGLKMGESKSVVFRTLSKSRLNVIIFNKEGYSRCPIPDKAAKALINNQSSSAPSFSTKSTAPRHPSFTNVEANTKRIVKDMCCYNKRMKLSSEVKNYVRDIAQFLDYSSKFYIVTMKNIHEVRQGDGCYNLKAGYGQISHKIIFKEIYSATSTASQQDTSGKNLHFSLPQDESVAGNSTSPVNAMFMPCTSNILLLL</sequence>
<gene>
    <name type="ordered locus">Os07g0232100</name>
    <name type="ordered locus">LOC_Os07g12820</name>
    <name type="ORF">OSJNBa0086N05.127</name>
</gene>
<keyword id="KW-0238">DNA-binding</keyword>
<keyword id="KW-0539">Nucleus</keyword>
<keyword id="KW-1185">Reference proteome</keyword>
<keyword id="KW-0804">Transcription</keyword>
<keyword id="KW-0805">Transcription regulation</keyword>
<reference key="1">
    <citation type="journal article" date="2005" name="Nature">
        <title>The map-based sequence of the rice genome.</title>
        <authorList>
            <consortium name="International rice genome sequencing project (IRGSP)"/>
        </authorList>
    </citation>
    <scope>NUCLEOTIDE SEQUENCE [LARGE SCALE GENOMIC DNA]</scope>
    <source>
        <strain>cv. Nipponbare</strain>
    </source>
</reference>
<reference key="2">
    <citation type="journal article" date="2013" name="Rice">
        <title>Improvement of the Oryza sativa Nipponbare reference genome using next generation sequence and optical map data.</title>
        <authorList>
            <person name="Kawahara Y."/>
            <person name="de la Bastide M."/>
            <person name="Hamilton J.P."/>
            <person name="Kanamori H."/>
            <person name="McCombie W.R."/>
            <person name="Ouyang S."/>
            <person name="Schwartz D.C."/>
            <person name="Tanaka T."/>
            <person name="Wu J."/>
            <person name="Zhou S."/>
            <person name="Childs K.L."/>
            <person name="Davidson R.M."/>
            <person name="Lin H."/>
            <person name="Quesada-Ocampo L."/>
            <person name="Vaillancourt B."/>
            <person name="Sakai H."/>
            <person name="Lee S.S."/>
            <person name="Kim J."/>
            <person name="Numa H."/>
            <person name="Itoh T."/>
            <person name="Buell C.R."/>
            <person name="Matsumoto T."/>
        </authorList>
    </citation>
    <scope>GENOME REANNOTATION</scope>
    <source>
        <strain>cv. Nipponbare</strain>
    </source>
</reference>
<protein>
    <recommendedName>
        <fullName>Putative B3 domain-containing protein LOC_Os07g12820</fullName>
    </recommendedName>
</protein>
<proteinExistence type="inferred from homology"/>
<accession>Q84YL3</accession>
<accession>A0A0P0X4G8</accession>
<evidence type="ECO:0000255" key="1">
    <source>
        <dbReference type="PROSITE-ProRule" id="PRU00326"/>
    </source>
</evidence>
<name>Y7282_ORYSJ</name>